<keyword id="KW-0333">Golgi apparatus</keyword>
<keyword id="KW-0406">Ion transport</keyword>
<keyword id="KW-0472">Membrane</keyword>
<keyword id="KW-1185">Reference proteome</keyword>
<keyword id="KW-0812">Transmembrane</keyword>
<keyword id="KW-1133">Transmembrane helix</keyword>
<keyword id="KW-0813">Transport</keyword>
<keyword id="KW-0862">Zinc</keyword>
<keyword id="KW-0864">Zinc transport</keyword>
<sequence>MGTIYLFRKTQRSLLGKLTQEFRLVTADRRSWKILLFGAINVVCTGFLLTWCSSTNSMALTAYTYLTIFDLFSLITSLISYWVMMKKPSPTYSFGFERLEVLAVFASTVLAQLGALFILKESAERFLEQPEIHTGRLLVGTFVALFFNLFTMLSIRNKPFAYVSEAASTSWLQEHVADLSRSLCGVIPGLSSIFLPRMNPFVLIDIAGALALCITYMLIEINNYFAVDTASAIAIAVMTFGTMYPMSVYSGKVLLQTTPPHVIGQLDKLLREVSTLDGVLEVRNEHFWTLGFGTMAGSVHVRIRRDANEQMVLAHVTNRLSTLVSTPTVQIFKDDWARPVLASGTMPPNMLNIPEHHVIQMPSLKSTVDELNPMTSTPSKPSGPPPEFAFNTPGKNMNPVILSNNQTRPFGVGYGTTPYTTTFNQGLGVPGVGNTQGLRTGLTNVANRYGTYTPGQFTQFRQ</sequence>
<organism>
    <name type="scientific">Xenopus laevis</name>
    <name type="common">African clawed frog</name>
    <dbReference type="NCBI Taxonomy" id="8355"/>
    <lineage>
        <taxon>Eukaryota</taxon>
        <taxon>Metazoa</taxon>
        <taxon>Chordata</taxon>
        <taxon>Craniata</taxon>
        <taxon>Vertebrata</taxon>
        <taxon>Euteleostomi</taxon>
        <taxon>Amphibia</taxon>
        <taxon>Batrachia</taxon>
        <taxon>Anura</taxon>
        <taxon>Pipoidea</taxon>
        <taxon>Pipidae</taxon>
        <taxon>Xenopodinae</taxon>
        <taxon>Xenopus</taxon>
        <taxon>Xenopus</taxon>
    </lineage>
</organism>
<reference key="1">
    <citation type="submission" date="2004-06" db="EMBL/GenBank/DDBJ databases">
        <authorList>
            <consortium name="NIH - Xenopus Gene Collection (XGC) project"/>
        </authorList>
    </citation>
    <scope>NUCLEOTIDE SEQUENCE [LARGE SCALE MRNA]</scope>
    <source>
        <tissue>Spleen</tissue>
    </source>
</reference>
<evidence type="ECO:0000250" key="1">
    <source>
        <dbReference type="UniProtKB" id="Q6NXT4"/>
    </source>
</evidence>
<evidence type="ECO:0000255" key="2"/>
<evidence type="ECO:0000305" key="3"/>
<protein>
    <recommendedName>
        <fullName>Zinc transporter 6-B</fullName>
        <shortName>ZnT-6-B</shortName>
    </recommendedName>
    <alternativeName>
        <fullName>Solute carrier family 30 member 6-B</fullName>
    </alternativeName>
</protein>
<name>ZNT6B_XENLA</name>
<dbReference type="EMBL" id="BC072974">
    <property type="protein sequence ID" value="AAH72974.1"/>
    <property type="molecule type" value="mRNA"/>
</dbReference>
<dbReference type="RefSeq" id="NP_001085582.1">
    <property type="nucleotide sequence ID" value="NM_001092113.1"/>
</dbReference>
<dbReference type="SMR" id="Q6GPY1"/>
<dbReference type="DNASU" id="444008"/>
<dbReference type="GeneID" id="444008"/>
<dbReference type="KEGG" id="xla:444008"/>
<dbReference type="AGR" id="Xenbase:XB-GENE-5779516"/>
<dbReference type="CTD" id="444008"/>
<dbReference type="Xenbase" id="XB-GENE-5779516">
    <property type="gene designation" value="slc30a6.S"/>
</dbReference>
<dbReference type="OrthoDB" id="5382797at2759"/>
<dbReference type="Proteomes" id="UP000186698">
    <property type="component" value="Chromosome 5S"/>
</dbReference>
<dbReference type="Bgee" id="444008">
    <property type="expression patterns" value="Expressed in egg cell and 19 other cell types or tissues"/>
</dbReference>
<dbReference type="GO" id="GO:0005794">
    <property type="term" value="C:Golgi apparatus"/>
    <property type="evidence" value="ECO:0000318"/>
    <property type="project" value="GO_Central"/>
</dbReference>
<dbReference type="GO" id="GO:0032588">
    <property type="term" value="C:trans-Golgi network membrane"/>
    <property type="evidence" value="ECO:0000250"/>
    <property type="project" value="UniProtKB"/>
</dbReference>
<dbReference type="GO" id="GO:0008324">
    <property type="term" value="F:monoatomic cation transmembrane transporter activity"/>
    <property type="evidence" value="ECO:0007669"/>
    <property type="project" value="InterPro"/>
</dbReference>
<dbReference type="GO" id="GO:1904257">
    <property type="term" value="P:zinc ion import into Golgi lumen"/>
    <property type="evidence" value="ECO:0000250"/>
    <property type="project" value="UniProtKB"/>
</dbReference>
<dbReference type="GO" id="GO:0006829">
    <property type="term" value="P:zinc ion transport"/>
    <property type="evidence" value="ECO:0000318"/>
    <property type="project" value="GO_Central"/>
</dbReference>
<dbReference type="FunFam" id="1.20.1510.10:FF:000009">
    <property type="entry name" value="zinc transporter 6 isoform X1"/>
    <property type="match status" value="1"/>
</dbReference>
<dbReference type="Gene3D" id="1.20.1510.10">
    <property type="entry name" value="Cation efflux protein transmembrane domain"/>
    <property type="match status" value="1"/>
</dbReference>
<dbReference type="InterPro" id="IPR002524">
    <property type="entry name" value="Cation_efflux"/>
</dbReference>
<dbReference type="InterPro" id="IPR027469">
    <property type="entry name" value="Cation_efflux_TMD_sf"/>
</dbReference>
<dbReference type="InterPro" id="IPR052005">
    <property type="entry name" value="CDF_SLC30A"/>
</dbReference>
<dbReference type="NCBIfam" id="TIGR01297">
    <property type="entry name" value="CDF"/>
    <property type="match status" value="1"/>
</dbReference>
<dbReference type="PANTHER" id="PTHR46531">
    <property type="entry name" value="ZINC TRANSPORTER 6"/>
    <property type="match status" value="1"/>
</dbReference>
<dbReference type="PANTHER" id="PTHR46531:SF1">
    <property type="entry name" value="ZINC TRANSPORTER 6"/>
    <property type="match status" value="1"/>
</dbReference>
<dbReference type="Pfam" id="PF01545">
    <property type="entry name" value="Cation_efflux"/>
    <property type="match status" value="1"/>
</dbReference>
<dbReference type="SUPFAM" id="SSF161111">
    <property type="entry name" value="Cation efflux protein transmembrane domain-like"/>
    <property type="match status" value="1"/>
</dbReference>
<gene>
    <name type="primary">slc30a6-b</name>
    <name type="synonym">znt6-b</name>
</gene>
<proteinExistence type="evidence at transcript level"/>
<comment type="function">
    <text evidence="1">Has probably no intrinsic transporter activity but together with SLC30A5 forms a functional zinc ion:proton antiporter heterodimer, mediating zinc entry into the lumen of organelles along the secretory pathway. As part of that zinc ion:proton antiporter, contributes to zinc ion homeostasis within the early secretory pathway and regulates the activation and folding of enzymes like alkaline phosphatases and enzymes involved in phosphatidylinositol glycan anchor biosynthesis.</text>
</comment>
<comment type="subunit">
    <text evidence="1">Heterodimer with SLC30A5; form a functional zinc ion transmembrane transporter.</text>
</comment>
<comment type="subcellular location">
    <subcellularLocation>
        <location evidence="1">Golgi apparatus</location>
        <location evidence="1">trans-Golgi network membrane</location>
        <topology evidence="2">Multi-pass membrane protein</topology>
    </subcellularLocation>
</comment>
<comment type="similarity">
    <text evidence="3">Belongs to the cation diffusion facilitator (CDF) transporter (TC 2.A.4) family. SLC30A subfamily.</text>
</comment>
<comment type="caution">
    <text evidence="1">Hydrophilic histidine residues that participate to zinc binding in transporters of the family are not conserved in SLC30A6.</text>
</comment>
<feature type="chain" id="PRO_0000312578" description="Zinc transporter 6-B">
    <location>
        <begin position="1"/>
        <end position="462"/>
    </location>
</feature>
<feature type="topological domain" description="Cytoplasmic" evidence="2">
    <location>
        <begin position="1"/>
        <end position="33"/>
    </location>
</feature>
<feature type="transmembrane region" description="Helical" evidence="2">
    <location>
        <begin position="34"/>
        <end position="54"/>
    </location>
</feature>
<feature type="topological domain" description="Extracellular" evidence="2">
    <location>
        <begin position="55"/>
        <end position="64"/>
    </location>
</feature>
<feature type="transmembrane region" description="Helical" evidence="2">
    <location>
        <begin position="65"/>
        <end position="85"/>
    </location>
</feature>
<feature type="topological domain" description="Cytoplasmic" evidence="2">
    <location>
        <begin position="86"/>
        <end position="98"/>
    </location>
</feature>
<feature type="transmembrane region" description="Helical" evidence="2">
    <location>
        <begin position="99"/>
        <end position="119"/>
    </location>
</feature>
<feature type="topological domain" description="Extracellular" evidence="2">
    <location>
        <begin position="120"/>
        <end position="134"/>
    </location>
</feature>
<feature type="transmembrane region" description="Helical" evidence="2">
    <location>
        <begin position="135"/>
        <end position="155"/>
    </location>
</feature>
<feature type="topological domain" description="Cytoplasmic" evidence="2">
    <location>
        <begin position="156"/>
        <end position="200"/>
    </location>
</feature>
<feature type="transmembrane region" description="Helical" evidence="2">
    <location>
        <begin position="201"/>
        <end position="221"/>
    </location>
</feature>
<feature type="topological domain" description="Extracellular" evidence="2">
    <location>
        <begin position="222"/>
        <end position="223"/>
    </location>
</feature>
<feature type="transmembrane region" description="Helical" evidence="2">
    <location>
        <begin position="224"/>
        <end position="244"/>
    </location>
</feature>
<feature type="topological domain" description="Cytoplasmic" evidence="2">
    <location>
        <begin position="245"/>
        <end position="462"/>
    </location>
</feature>
<accession>Q6GPY1</accession>